<accession>B5ZYK9</accession>
<protein>
    <recommendedName>
        <fullName evidence="2">Formamidopyrimidine-DNA glycosylase</fullName>
        <shortName evidence="2">Fapy-DNA glycosylase</shortName>
        <ecNumber evidence="2">3.2.2.23</ecNumber>
    </recommendedName>
    <alternativeName>
        <fullName evidence="2">DNA-(apurinic or apyrimidinic site) lyase MutM</fullName>
        <shortName evidence="2">AP lyase MutM</shortName>
        <ecNumber evidence="2">4.2.99.18</ecNumber>
    </alternativeName>
</protein>
<evidence type="ECO:0000250" key="1"/>
<evidence type="ECO:0000255" key="2">
    <source>
        <dbReference type="HAMAP-Rule" id="MF_00103"/>
    </source>
</evidence>
<keyword id="KW-0227">DNA damage</keyword>
<keyword id="KW-0234">DNA repair</keyword>
<keyword id="KW-0238">DNA-binding</keyword>
<keyword id="KW-0326">Glycosidase</keyword>
<keyword id="KW-0378">Hydrolase</keyword>
<keyword id="KW-0456">Lyase</keyword>
<keyword id="KW-0479">Metal-binding</keyword>
<keyword id="KW-0511">Multifunctional enzyme</keyword>
<keyword id="KW-1185">Reference proteome</keyword>
<keyword id="KW-0862">Zinc</keyword>
<keyword id="KW-0863">Zinc-finger</keyword>
<proteinExistence type="inferred from homology"/>
<gene>
    <name evidence="2" type="primary">mutM</name>
    <name evidence="2" type="synonym">fpg</name>
    <name type="ordered locus">Rleg2_4368</name>
</gene>
<name>FPG_RHILW</name>
<reference key="1">
    <citation type="journal article" date="2010" name="Stand. Genomic Sci.">
        <title>Complete genome sequence of Rhizobium leguminosarum bv trifolii strain WSM2304, an effective microsymbiont of the South American clover Trifolium polymorphum.</title>
        <authorList>
            <person name="Reeve W."/>
            <person name="O'Hara G."/>
            <person name="Chain P."/>
            <person name="Ardley J."/>
            <person name="Brau L."/>
            <person name="Nandesena K."/>
            <person name="Tiwari R."/>
            <person name="Malfatti S."/>
            <person name="Kiss H."/>
            <person name="Lapidus A."/>
            <person name="Copeland A."/>
            <person name="Nolan M."/>
            <person name="Land M."/>
            <person name="Ivanova N."/>
            <person name="Mavromatis K."/>
            <person name="Markowitz V."/>
            <person name="Kyrpides N."/>
            <person name="Melino V."/>
            <person name="Denton M."/>
            <person name="Yates R."/>
            <person name="Howieson J."/>
        </authorList>
    </citation>
    <scope>NUCLEOTIDE SEQUENCE [LARGE SCALE GENOMIC DNA]</scope>
    <source>
        <strain>WSM2304</strain>
    </source>
</reference>
<comment type="function">
    <text evidence="2">Involved in base excision repair of DNA damaged by oxidation or by mutagenic agents. Acts as a DNA glycosylase that recognizes and removes damaged bases. Has a preference for oxidized purines, such as 7,8-dihydro-8-oxoguanine (8-oxoG). Has AP (apurinic/apyrimidinic) lyase activity and introduces nicks in the DNA strand. Cleaves the DNA backbone by beta-delta elimination to generate a single-strand break at the site of the removed base with both 3'- and 5'-phosphates.</text>
</comment>
<comment type="catalytic activity">
    <reaction evidence="2">
        <text>Hydrolysis of DNA containing ring-opened 7-methylguanine residues, releasing 2,6-diamino-4-hydroxy-5-(N-methyl)formamidopyrimidine.</text>
        <dbReference type="EC" id="3.2.2.23"/>
    </reaction>
</comment>
<comment type="catalytic activity">
    <reaction evidence="2">
        <text>2'-deoxyribonucleotide-(2'-deoxyribose 5'-phosphate)-2'-deoxyribonucleotide-DNA = a 3'-end 2'-deoxyribonucleotide-(2,3-dehydro-2,3-deoxyribose 5'-phosphate)-DNA + a 5'-end 5'-phospho-2'-deoxyribonucleoside-DNA + H(+)</text>
        <dbReference type="Rhea" id="RHEA:66592"/>
        <dbReference type="Rhea" id="RHEA-COMP:13180"/>
        <dbReference type="Rhea" id="RHEA-COMP:16897"/>
        <dbReference type="Rhea" id="RHEA-COMP:17067"/>
        <dbReference type="ChEBI" id="CHEBI:15378"/>
        <dbReference type="ChEBI" id="CHEBI:136412"/>
        <dbReference type="ChEBI" id="CHEBI:157695"/>
        <dbReference type="ChEBI" id="CHEBI:167181"/>
        <dbReference type="EC" id="4.2.99.18"/>
    </reaction>
</comment>
<comment type="cofactor">
    <cofactor evidence="2">
        <name>Zn(2+)</name>
        <dbReference type="ChEBI" id="CHEBI:29105"/>
    </cofactor>
    <text evidence="2">Binds 1 zinc ion per subunit.</text>
</comment>
<comment type="subunit">
    <text evidence="2">Monomer.</text>
</comment>
<comment type="similarity">
    <text evidence="2">Belongs to the FPG family.</text>
</comment>
<organism>
    <name type="scientific">Rhizobium leguminosarum bv. trifolii (strain WSM2304)</name>
    <dbReference type="NCBI Taxonomy" id="395492"/>
    <lineage>
        <taxon>Bacteria</taxon>
        <taxon>Pseudomonadati</taxon>
        <taxon>Pseudomonadota</taxon>
        <taxon>Alphaproteobacteria</taxon>
        <taxon>Hyphomicrobiales</taxon>
        <taxon>Rhizobiaceae</taxon>
        <taxon>Rhizobium/Agrobacterium group</taxon>
        <taxon>Rhizobium</taxon>
    </lineage>
</organism>
<sequence>MPELPEVETVKRGLAPAMEGARVAKLELRRGDLRFPFPDAFADRVSGRTIVSLGRRAKYLLVDLDDGNTLISHLGMSGSFRIEEGRIEEGAGAATPGEFHHARSKDEKHDHVVFHLESPAGPRRVVYNDPRRFGFMDMVGRADLAAHPFFRDLGPEPTGNELGAAYLAERFRHKAQPLKSALLDQKNIAGLGNIYVCEALWRAHLSPIRAAGTLATAGGRPKEQLNLLVASIRDVIADAITAGGSSLRDHIQTDGSLGYFQHSFSVYDREGQACRTPGCGGTVARIVQAGRSTFYCATCQK</sequence>
<dbReference type="EC" id="3.2.2.23" evidence="2"/>
<dbReference type="EC" id="4.2.99.18" evidence="2"/>
<dbReference type="EMBL" id="CP001191">
    <property type="protein sequence ID" value="ACI57626.1"/>
    <property type="molecule type" value="Genomic_DNA"/>
</dbReference>
<dbReference type="RefSeq" id="WP_012559728.1">
    <property type="nucleotide sequence ID" value="NC_011369.1"/>
</dbReference>
<dbReference type="SMR" id="B5ZYK9"/>
<dbReference type="STRING" id="395492.Rleg2_4368"/>
<dbReference type="KEGG" id="rlt:Rleg2_4368"/>
<dbReference type="eggNOG" id="COG0266">
    <property type="taxonomic scope" value="Bacteria"/>
</dbReference>
<dbReference type="HOGENOM" id="CLU_038423_1_1_5"/>
<dbReference type="Proteomes" id="UP000008330">
    <property type="component" value="Chromosome"/>
</dbReference>
<dbReference type="GO" id="GO:0034039">
    <property type="term" value="F:8-oxo-7,8-dihydroguanine DNA N-glycosylase activity"/>
    <property type="evidence" value="ECO:0007669"/>
    <property type="project" value="TreeGrafter"/>
</dbReference>
<dbReference type="GO" id="GO:0140078">
    <property type="term" value="F:class I DNA-(apurinic or apyrimidinic site) endonuclease activity"/>
    <property type="evidence" value="ECO:0007669"/>
    <property type="project" value="UniProtKB-EC"/>
</dbReference>
<dbReference type="GO" id="GO:0003684">
    <property type="term" value="F:damaged DNA binding"/>
    <property type="evidence" value="ECO:0007669"/>
    <property type="project" value="InterPro"/>
</dbReference>
<dbReference type="GO" id="GO:0008270">
    <property type="term" value="F:zinc ion binding"/>
    <property type="evidence" value="ECO:0007669"/>
    <property type="project" value="UniProtKB-UniRule"/>
</dbReference>
<dbReference type="GO" id="GO:0006284">
    <property type="term" value="P:base-excision repair"/>
    <property type="evidence" value="ECO:0007669"/>
    <property type="project" value="InterPro"/>
</dbReference>
<dbReference type="CDD" id="cd08966">
    <property type="entry name" value="EcFpg-like_N"/>
    <property type="match status" value="1"/>
</dbReference>
<dbReference type="FunFam" id="1.10.8.50:FF:000003">
    <property type="entry name" value="Formamidopyrimidine-DNA glycosylase"/>
    <property type="match status" value="1"/>
</dbReference>
<dbReference type="Gene3D" id="1.10.8.50">
    <property type="match status" value="1"/>
</dbReference>
<dbReference type="Gene3D" id="3.20.190.10">
    <property type="entry name" value="MutM-like, N-terminal"/>
    <property type="match status" value="1"/>
</dbReference>
<dbReference type="HAMAP" id="MF_00103">
    <property type="entry name" value="Fapy_DNA_glycosyl"/>
    <property type="match status" value="1"/>
</dbReference>
<dbReference type="InterPro" id="IPR015886">
    <property type="entry name" value="DNA_glyclase/AP_lyase_DNA-bd"/>
</dbReference>
<dbReference type="InterPro" id="IPR015887">
    <property type="entry name" value="DNA_glyclase_Znf_dom_DNA_BS"/>
</dbReference>
<dbReference type="InterPro" id="IPR020629">
    <property type="entry name" value="Formamido-pyr_DNA_Glyclase"/>
</dbReference>
<dbReference type="InterPro" id="IPR012319">
    <property type="entry name" value="FPG_cat"/>
</dbReference>
<dbReference type="InterPro" id="IPR035937">
    <property type="entry name" value="MutM-like_N-ter"/>
</dbReference>
<dbReference type="InterPro" id="IPR010979">
    <property type="entry name" value="Ribosomal_uS13-like_H2TH"/>
</dbReference>
<dbReference type="InterPro" id="IPR000214">
    <property type="entry name" value="Znf_DNA_glyclase/AP_lyase"/>
</dbReference>
<dbReference type="InterPro" id="IPR010663">
    <property type="entry name" value="Znf_FPG/IleRS"/>
</dbReference>
<dbReference type="NCBIfam" id="TIGR00577">
    <property type="entry name" value="fpg"/>
    <property type="match status" value="1"/>
</dbReference>
<dbReference type="NCBIfam" id="NF002211">
    <property type="entry name" value="PRK01103.1"/>
    <property type="match status" value="1"/>
</dbReference>
<dbReference type="PANTHER" id="PTHR22993">
    <property type="entry name" value="FORMAMIDOPYRIMIDINE-DNA GLYCOSYLASE"/>
    <property type="match status" value="1"/>
</dbReference>
<dbReference type="PANTHER" id="PTHR22993:SF9">
    <property type="entry name" value="FORMAMIDOPYRIMIDINE-DNA GLYCOSYLASE"/>
    <property type="match status" value="1"/>
</dbReference>
<dbReference type="Pfam" id="PF01149">
    <property type="entry name" value="Fapy_DNA_glyco"/>
    <property type="match status" value="1"/>
</dbReference>
<dbReference type="Pfam" id="PF06831">
    <property type="entry name" value="H2TH"/>
    <property type="match status" value="1"/>
</dbReference>
<dbReference type="Pfam" id="PF06827">
    <property type="entry name" value="zf-FPG_IleRS"/>
    <property type="match status" value="1"/>
</dbReference>
<dbReference type="SMART" id="SM00898">
    <property type="entry name" value="Fapy_DNA_glyco"/>
    <property type="match status" value="1"/>
</dbReference>
<dbReference type="SMART" id="SM01232">
    <property type="entry name" value="H2TH"/>
    <property type="match status" value="1"/>
</dbReference>
<dbReference type="SUPFAM" id="SSF57716">
    <property type="entry name" value="Glucocorticoid receptor-like (DNA-binding domain)"/>
    <property type="match status" value="1"/>
</dbReference>
<dbReference type="SUPFAM" id="SSF81624">
    <property type="entry name" value="N-terminal domain of MutM-like DNA repair proteins"/>
    <property type="match status" value="1"/>
</dbReference>
<dbReference type="SUPFAM" id="SSF46946">
    <property type="entry name" value="S13-like H2TH domain"/>
    <property type="match status" value="1"/>
</dbReference>
<dbReference type="PROSITE" id="PS51068">
    <property type="entry name" value="FPG_CAT"/>
    <property type="match status" value="1"/>
</dbReference>
<dbReference type="PROSITE" id="PS01242">
    <property type="entry name" value="ZF_FPG_1"/>
    <property type="match status" value="1"/>
</dbReference>
<dbReference type="PROSITE" id="PS51066">
    <property type="entry name" value="ZF_FPG_2"/>
    <property type="match status" value="1"/>
</dbReference>
<feature type="initiator methionine" description="Removed" evidence="1">
    <location>
        <position position="1"/>
    </location>
</feature>
<feature type="chain" id="PRO_1000094067" description="Formamidopyrimidine-DNA glycosylase">
    <location>
        <begin position="2"/>
        <end position="301"/>
    </location>
</feature>
<feature type="zinc finger region" description="FPG-type" evidence="2">
    <location>
        <begin position="265"/>
        <end position="301"/>
    </location>
</feature>
<feature type="active site" description="Schiff-base intermediate with DNA" evidence="2">
    <location>
        <position position="2"/>
    </location>
</feature>
<feature type="active site" description="Proton donor" evidence="2">
    <location>
        <position position="3"/>
    </location>
</feature>
<feature type="active site" description="Proton donor; for beta-elimination activity" evidence="2">
    <location>
        <position position="58"/>
    </location>
</feature>
<feature type="active site" description="Proton donor; for delta-elimination activity" evidence="2">
    <location>
        <position position="291"/>
    </location>
</feature>
<feature type="binding site" evidence="2">
    <location>
        <position position="109"/>
    </location>
    <ligand>
        <name>DNA</name>
        <dbReference type="ChEBI" id="CHEBI:16991"/>
    </ligand>
</feature>
<feature type="binding site" evidence="2">
    <location>
        <position position="131"/>
    </location>
    <ligand>
        <name>DNA</name>
        <dbReference type="ChEBI" id="CHEBI:16991"/>
    </ligand>
</feature>
<feature type="binding site" evidence="2">
    <location>
        <position position="174"/>
    </location>
    <ligand>
        <name>DNA</name>
        <dbReference type="ChEBI" id="CHEBI:16991"/>
    </ligand>
</feature>